<name>MARE1_CHICK</name>
<protein>
    <recommendedName>
        <fullName>Microtubule-associated protein RP/EB family member 1</fullName>
    </recommendedName>
</protein>
<comment type="function">
    <text evidence="1">Plus-end tracking protein (+TIP) that binds to the plus-end of microtubules and regulates the dynamics of the microtubule cytoskeleton. Promotes cytoplasmic microtubule nucleation and elongation. Involved in mitotic spindle positioning by stabilizing microtubules and promoting dynamic connection between astral microtubules and the cortex during mitotic chromosome segregation.</text>
</comment>
<comment type="subcellular location">
    <subcellularLocation>
        <location evidence="1">Cytoplasm</location>
        <location evidence="1">Cytoskeleton</location>
    </subcellularLocation>
    <subcellularLocation>
        <location evidence="1">Cytoplasm</location>
        <location evidence="1">Cytoskeleton</location>
        <location evidence="1">Microtubule organizing center</location>
        <location evidence="1">Centrosome</location>
    </subcellularLocation>
    <subcellularLocation>
        <location evidence="1">Golgi apparatus</location>
    </subcellularLocation>
    <subcellularLocation>
        <location evidence="1">Cytoplasm</location>
        <location evidence="1">Cytoskeleton</location>
        <location evidence="1">Spindle</location>
    </subcellularLocation>
    <subcellularLocation>
        <location evidence="1">Cytoplasm</location>
        <location evidence="1">Cytoskeleton</location>
        <location evidence="1">Spindle pole</location>
    </subcellularLocation>
</comment>
<comment type="similarity">
    <text evidence="4">Belongs to the MAPRE family.</text>
</comment>
<sequence length="258" mass="29143">MAVNVYSTSVTSDNLSRHDMLAWINESLQLTLTKIEQLCSGAAYCQFMDMLFPGSVALKKVKFQAKLEHEYIQNFKVLQAGFKRMGVDKIIPVDKLVKGKFQDNFEFVQWFKKFFDANYDGKEYDPVAARQGQETVAPNLVAPVVNKPKKPLAPQRPIVAQRTPATPKGSTGMVKKAAGDDESAGLIEQINVLKLTVEDLEKERDFYFGKLRNIELICQENEGENDPVLQRIVEILYATDEGFVIPDEGAPQEEQEEY</sequence>
<keyword id="KW-0131">Cell cycle</keyword>
<keyword id="KW-0132">Cell division</keyword>
<keyword id="KW-0963">Cytoplasm</keyword>
<keyword id="KW-0206">Cytoskeleton</keyword>
<keyword id="KW-0333">Golgi apparatus</keyword>
<keyword id="KW-0493">Microtubule</keyword>
<keyword id="KW-0498">Mitosis</keyword>
<keyword id="KW-1185">Reference proteome</keyword>
<dbReference type="EMBL" id="AJ719807">
    <property type="protein sequence ID" value="CAG31466.1"/>
    <property type="molecule type" value="mRNA"/>
</dbReference>
<dbReference type="RefSeq" id="NP_001026031.1">
    <property type="nucleotide sequence ID" value="NM_001030860.2"/>
</dbReference>
<dbReference type="BMRB" id="Q5ZLC7"/>
<dbReference type="SMR" id="Q5ZLC7"/>
<dbReference type="FunCoup" id="Q5ZLC7">
    <property type="interactions" value="2331"/>
</dbReference>
<dbReference type="STRING" id="9031.ENSGALP00000010754"/>
<dbReference type="PaxDb" id="9031-ENSGALP00000010754"/>
<dbReference type="Ensembl" id="ENSGALT00000010768">
    <property type="protein sequence ID" value="ENSGALP00000010754"/>
    <property type="gene ID" value="ENSGALG00000006657"/>
</dbReference>
<dbReference type="Ensembl" id="ENSGALT00010031922.1">
    <property type="protein sequence ID" value="ENSGALP00010018719.1"/>
    <property type="gene ID" value="ENSGALG00010013275.1"/>
</dbReference>
<dbReference type="GeneID" id="419288"/>
<dbReference type="KEGG" id="gga:419288"/>
<dbReference type="CTD" id="22919"/>
<dbReference type="VEuPathDB" id="HostDB:geneid_419288"/>
<dbReference type="eggNOG" id="KOG3000">
    <property type="taxonomic scope" value="Eukaryota"/>
</dbReference>
<dbReference type="GeneTree" id="ENSGT00490000043329"/>
<dbReference type="HOGENOM" id="CLU_041744_1_1_1"/>
<dbReference type="InParanoid" id="Q5ZLC7"/>
<dbReference type="OrthoDB" id="2119228at2759"/>
<dbReference type="PhylomeDB" id="Q5ZLC7"/>
<dbReference type="TreeFam" id="TF313620"/>
<dbReference type="PRO" id="PR:Q5ZLC7"/>
<dbReference type="Proteomes" id="UP000000539">
    <property type="component" value="Chromosome 20"/>
</dbReference>
<dbReference type="GO" id="GO:0031253">
    <property type="term" value="C:cell projection membrane"/>
    <property type="evidence" value="ECO:0007669"/>
    <property type="project" value="Ensembl"/>
</dbReference>
<dbReference type="GO" id="GO:0005813">
    <property type="term" value="C:centrosome"/>
    <property type="evidence" value="ECO:0007669"/>
    <property type="project" value="UniProtKB-SubCell"/>
</dbReference>
<dbReference type="GO" id="GO:0036064">
    <property type="term" value="C:ciliary basal body"/>
    <property type="evidence" value="ECO:0007669"/>
    <property type="project" value="Ensembl"/>
</dbReference>
<dbReference type="GO" id="GO:0030981">
    <property type="term" value="C:cortical microtubule cytoskeleton"/>
    <property type="evidence" value="ECO:0000250"/>
    <property type="project" value="UniProtKB"/>
</dbReference>
<dbReference type="GO" id="GO:0005925">
    <property type="term" value="C:focal adhesion"/>
    <property type="evidence" value="ECO:0007669"/>
    <property type="project" value="Ensembl"/>
</dbReference>
<dbReference type="GO" id="GO:0005794">
    <property type="term" value="C:Golgi apparatus"/>
    <property type="evidence" value="ECO:0007669"/>
    <property type="project" value="UniProtKB-SubCell"/>
</dbReference>
<dbReference type="GO" id="GO:0005874">
    <property type="term" value="C:microtubule"/>
    <property type="evidence" value="ECO:0000250"/>
    <property type="project" value="UniProtKB"/>
</dbReference>
<dbReference type="GO" id="GO:0035371">
    <property type="term" value="C:microtubule plus-end"/>
    <property type="evidence" value="ECO:0007669"/>
    <property type="project" value="Ensembl"/>
</dbReference>
<dbReference type="GO" id="GO:1905721">
    <property type="term" value="C:mitotic spindle astral microtubule end"/>
    <property type="evidence" value="ECO:0007669"/>
    <property type="project" value="Ensembl"/>
</dbReference>
<dbReference type="GO" id="GO:1990498">
    <property type="term" value="C:mitotic spindle microtubule"/>
    <property type="evidence" value="ECO:0007669"/>
    <property type="project" value="Ensembl"/>
</dbReference>
<dbReference type="GO" id="GO:0097431">
    <property type="term" value="C:mitotic spindle pole"/>
    <property type="evidence" value="ECO:0000250"/>
    <property type="project" value="UniProtKB"/>
</dbReference>
<dbReference type="GO" id="GO:0042802">
    <property type="term" value="F:identical protein binding"/>
    <property type="evidence" value="ECO:0007669"/>
    <property type="project" value="Ensembl"/>
</dbReference>
<dbReference type="GO" id="GO:0051010">
    <property type="term" value="F:microtubule plus-end binding"/>
    <property type="evidence" value="ECO:0000250"/>
    <property type="project" value="UniProtKB"/>
</dbReference>
<dbReference type="GO" id="GO:0120283">
    <property type="term" value="F:protein serine/threonine kinase binding"/>
    <property type="evidence" value="ECO:0007669"/>
    <property type="project" value="Ensembl"/>
</dbReference>
<dbReference type="GO" id="GO:0051315">
    <property type="term" value="P:attachment of mitotic spindle microtubules to kinetochore"/>
    <property type="evidence" value="ECO:0000250"/>
    <property type="project" value="UniProtKB"/>
</dbReference>
<dbReference type="GO" id="GO:0051301">
    <property type="term" value="P:cell division"/>
    <property type="evidence" value="ECO:0007669"/>
    <property type="project" value="UniProtKB-KW"/>
</dbReference>
<dbReference type="GO" id="GO:0016477">
    <property type="term" value="P:cell migration"/>
    <property type="evidence" value="ECO:0007669"/>
    <property type="project" value="Ensembl"/>
</dbReference>
<dbReference type="GO" id="GO:0000132">
    <property type="term" value="P:establishment of mitotic spindle orientation"/>
    <property type="evidence" value="ECO:0000250"/>
    <property type="project" value="UniProtKB"/>
</dbReference>
<dbReference type="GO" id="GO:0001578">
    <property type="term" value="P:microtubule bundle formation"/>
    <property type="evidence" value="ECO:0007669"/>
    <property type="project" value="Ensembl"/>
</dbReference>
<dbReference type="GO" id="GO:0046785">
    <property type="term" value="P:microtubule polymerization"/>
    <property type="evidence" value="ECO:0007669"/>
    <property type="project" value="Ensembl"/>
</dbReference>
<dbReference type="GO" id="GO:0031115">
    <property type="term" value="P:negative regulation of microtubule polymerization"/>
    <property type="evidence" value="ECO:0000250"/>
    <property type="project" value="UniProtKB"/>
</dbReference>
<dbReference type="GO" id="GO:1905515">
    <property type="term" value="P:non-motile cilium assembly"/>
    <property type="evidence" value="ECO:0007669"/>
    <property type="project" value="Ensembl"/>
</dbReference>
<dbReference type="GO" id="GO:0031116">
    <property type="term" value="P:positive regulation of microtubule polymerization"/>
    <property type="evidence" value="ECO:0007669"/>
    <property type="project" value="Ensembl"/>
</dbReference>
<dbReference type="GO" id="GO:1902888">
    <property type="term" value="P:protein localization to astral microtubule"/>
    <property type="evidence" value="ECO:0000250"/>
    <property type="project" value="UniProtKB"/>
</dbReference>
<dbReference type="GO" id="GO:0071539">
    <property type="term" value="P:protein localization to centrosome"/>
    <property type="evidence" value="ECO:0007669"/>
    <property type="project" value="Ensembl"/>
</dbReference>
<dbReference type="GO" id="GO:0035372">
    <property type="term" value="P:protein localization to microtubule"/>
    <property type="evidence" value="ECO:0000250"/>
    <property type="project" value="UniProtKB"/>
</dbReference>
<dbReference type="GO" id="GO:1902480">
    <property type="term" value="P:protein localization to mitotic spindle"/>
    <property type="evidence" value="ECO:0007669"/>
    <property type="project" value="Ensembl"/>
</dbReference>
<dbReference type="FunFam" id="1.20.5.1430:FF:000001">
    <property type="entry name" value="microtubule-associated protein RP/EB family member 1"/>
    <property type="match status" value="1"/>
</dbReference>
<dbReference type="FunFam" id="1.10.418.10:FF:000007">
    <property type="entry name" value="Microtubule-associated protein, RP/EB family, member 2"/>
    <property type="match status" value="1"/>
</dbReference>
<dbReference type="Gene3D" id="1.20.5.1430">
    <property type="match status" value="1"/>
</dbReference>
<dbReference type="Gene3D" id="1.10.418.10">
    <property type="entry name" value="Calponin-like domain"/>
    <property type="match status" value="1"/>
</dbReference>
<dbReference type="InterPro" id="IPR001715">
    <property type="entry name" value="CH_dom"/>
</dbReference>
<dbReference type="InterPro" id="IPR036872">
    <property type="entry name" value="CH_dom_sf"/>
</dbReference>
<dbReference type="InterPro" id="IPR004953">
    <property type="entry name" value="EB1_C"/>
</dbReference>
<dbReference type="InterPro" id="IPR036133">
    <property type="entry name" value="EB1_C_sf"/>
</dbReference>
<dbReference type="InterPro" id="IPR027328">
    <property type="entry name" value="MAPRE"/>
</dbReference>
<dbReference type="PANTHER" id="PTHR10623">
    <property type="entry name" value="MICROTUBULE-ASSOCIATED PROTEIN RP/EB FAMILY MEMBER"/>
    <property type="match status" value="1"/>
</dbReference>
<dbReference type="Pfam" id="PF00307">
    <property type="entry name" value="CH"/>
    <property type="match status" value="1"/>
</dbReference>
<dbReference type="Pfam" id="PF03271">
    <property type="entry name" value="EB1"/>
    <property type="match status" value="1"/>
</dbReference>
<dbReference type="SUPFAM" id="SSF47576">
    <property type="entry name" value="Calponin-homology domain, CH-domain"/>
    <property type="match status" value="1"/>
</dbReference>
<dbReference type="SUPFAM" id="SSF140612">
    <property type="entry name" value="EB1 dimerisation domain-like"/>
    <property type="match status" value="1"/>
</dbReference>
<dbReference type="PROSITE" id="PS50021">
    <property type="entry name" value="CH"/>
    <property type="match status" value="1"/>
</dbReference>
<dbReference type="PROSITE" id="PS51230">
    <property type="entry name" value="EB1_C"/>
    <property type="match status" value="1"/>
</dbReference>
<accession>Q5ZLC7</accession>
<evidence type="ECO:0000250" key="1">
    <source>
        <dbReference type="UniProtKB" id="Q15691"/>
    </source>
</evidence>
<evidence type="ECO:0000255" key="2">
    <source>
        <dbReference type="PROSITE-ProRule" id="PRU00044"/>
    </source>
</evidence>
<evidence type="ECO:0000255" key="3">
    <source>
        <dbReference type="PROSITE-ProRule" id="PRU00576"/>
    </source>
</evidence>
<evidence type="ECO:0000305" key="4"/>
<reference key="1">
    <citation type="journal article" date="2005" name="Genome Biol.">
        <title>Full-length cDNAs from chicken bursal lymphocytes to facilitate gene function analysis.</title>
        <authorList>
            <person name="Caldwell R.B."/>
            <person name="Kierzek A.M."/>
            <person name="Arakawa H."/>
            <person name="Bezzubov Y."/>
            <person name="Zaim J."/>
            <person name="Fiedler P."/>
            <person name="Kutter S."/>
            <person name="Blagodatski A."/>
            <person name="Kostovska D."/>
            <person name="Koter M."/>
            <person name="Plachy J."/>
            <person name="Carninci P."/>
            <person name="Hayashizaki Y."/>
            <person name="Buerstedde J.-M."/>
        </authorList>
    </citation>
    <scope>NUCLEOTIDE SEQUENCE [LARGE SCALE MRNA]</scope>
    <source>
        <strain>CB</strain>
        <tissue>Bursa of Fabricius</tissue>
    </source>
</reference>
<gene>
    <name type="primary">MAPRE1</name>
    <name type="ORF">RCJMB04_6l6</name>
</gene>
<organism>
    <name type="scientific">Gallus gallus</name>
    <name type="common">Chicken</name>
    <dbReference type="NCBI Taxonomy" id="9031"/>
    <lineage>
        <taxon>Eukaryota</taxon>
        <taxon>Metazoa</taxon>
        <taxon>Chordata</taxon>
        <taxon>Craniata</taxon>
        <taxon>Vertebrata</taxon>
        <taxon>Euteleostomi</taxon>
        <taxon>Archelosauria</taxon>
        <taxon>Archosauria</taxon>
        <taxon>Dinosauria</taxon>
        <taxon>Saurischia</taxon>
        <taxon>Theropoda</taxon>
        <taxon>Coelurosauria</taxon>
        <taxon>Aves</taxon>
        <taxon>Neognathae</taxon>
        <taxon>Galloanserae</taxon>
        <taxon>Galliformes</taxon>
        <taxon>Phasianidae</taxon>
        <taxon>Phasianinae</taxon>
        <taxon>Gallus</taxon>
    </lineage>
</organism>
<proteinExistence type="evidence at transcript level"/>
<feature type="chain" id="PRO_0000213421" description="Microtubule-associated protein RP/EB family member 1">
    <location>
        <begin position="1"/>
        <end position="258"/>
    </location>
</feature>
<feature type="domain" description="Calponin-homology (CH)" evidence="2">
    <location>
        <begin position="14"/>
        <end position="116"/>
    </location>
</feature>
<feature type="domain" description="EB1 C-terminal" evidence="3">
    <location>
        <begin position="175"/>
        <end position="245"/>
    </location>
</feature>